<feature type="chain" id="PRO_0000377731" description="AP2/ERF and B3 domain-containing protein Os01g0141000">
    <location>
        <begin position="1"/>
        <end position="365"/>
    </location>
</feature>
<feature type="DNA-binding region" description="AP2/ERF" evidence="2">
    <location>
        <begin position="68"/>
        <end position="123"/>
    </location>
</feature>
<feature type="DNA-binding region" description="TF-B3" evidence="1">
    <location>
        <begin position="182"/>
        <end position="294"/>
    </location>
</feature>
<feature type="region of interest" description="Disordered" evidence="3">
    <location>
        <begin position="1"/>
        <end position="24"/>
    </location>
</feature>
<proteinExistence type="evidence at transcript level"/>
<accession>Q9AWS0</accession>
<accession>A0A0P0UYP7</accession>
<organism>
    <name type="scientific">Oryza sativa subsp. japonica</name>
    <name type="common">Rice</name>
    <dbReference type="NCBI Taxonomy" id="39947"/>
    <lineage>
        <taxon>Eukaryota</taxon>
        <taxon>Viridiplantae</taxon>
        <taxon>Streptophyta</taxon>
        <taxon>Embryophyta</taxon>
        <taxon>Tracheophyta</taxon>
        <taxon>Spermatophyta</taxon>
        <taxon>Magnoliopsida</taxon>
        <taxon>Liliopsida</taxon>
        <taxon>Poales</taxon>
        <taxon>Poaceae</taxon>
        <taxon>BOP clade</taxon>
        <taxon>Oryzoideae</taxon>
        <taxon>Oryzeae</taxon>
        <taxon>Oryzinae</taxon>
        <taxon>Oryza</taxon>
        <taxon>Oryza sativa</taxon>
    </lineage>
</organism>
<dbReference type="EMBL" id="AP002913">
    <property type="protein sequence ID" value="BAB21218.1"/>
    <property type="molecule type" value="Genomic_DNA"/>
</dbReference>
<dbReference type="EMBL" id="AP008207">
    <property type="protein sequence ID" value="BAF03896.1"/>
    <property type="molecule type" value="Genomic_DNA"/>
</dbReference>
<dbReference type="EMBL" id="AP014957">
    <property type="protein sequence ID" value="BAS70316.1"/>
    <property type="molecule type" value="Genomic_DNA"/>
</dbReference>
<dbReference type="EMBL" id="AK065008">
    <property type="protein sequence ID" value="BAG89320.1"/>
    <property type="molecule type" value="mRNA"/>
</dbReference>
<dbReference type="RefSeq" id="XP_015622259.1">
    <property type="nucleotide sequence ID" value="XM_015766773.1"/>
</dbReference>
<dbReference type="SMR" id="Q9AWS0"/>
<dbReference type="FunCoup" id="Q9AWS0">
    <property type="interactions" value="3"/>
</dbReference>
<dbReference type="STRING" id="39947.Q9AWS0"/>
<dbReference type="PaxDb" id="39947-Q9AWS0"/>
<dbReference type="EnsemblPlants" id="Os01t0141000-01">
    <property type="protein sequence ID" value="Os01t0141000-01"/>
    <property type="gene ID" value="Os01g0141000"/>
</dbReference>
<dbReference type="Gramene" id="Os01t0141000-01">
    <property type="protein sequence ID" value="Os01t0141000-01"/>
    <property type="gene ID" value="Os01g0141000"/>
</dbReference>
<dbReference type="KEGG" id="dosa:Os01g0141000"/>
<dbReference type="eggNOG" id="ENOG502QRVI">
    <property type="taxonomic scope" value="Eukaryota"/>
</dbReference>
<dbReference type="HOGENOM" id="CLU_038898_0_0_1"/>
<dbReference type="InParanoid" id="Q9AWS0"/>
<dbReference type="OMA" id="KKQCVAH"/>
<dbReference type="OrthoDB" id="2020802at2759"/>
<dbReference type="PlantReactome" id="R-OSA-9826782">
    <property type="pathway name" value="Regulation of seed germination and coleoptile growth under submergence and normal gravity environment"/>
</dbReference>
<dbReference type="Proteomes" id="UP000000763">
    <property type="component" value="Chromosome 1"/>
</dbReference>
<dbReference type="Proteomes" id="UP000059680">
    <property type="component" value="Chromosome 1"/>
</dbReference>
<dbReference type="GO" id="GO:0005634">
    <property type="term" value="C:nucleus"/>
    <property type="evidence" value="ECO:0007669"/>
    <property type="project" value="UniProtKB-SubCell"/>
</dbReference>
<dbReference type="GO" id="GO:0003677">
    <property type="term" value="F:DNA binding"/>
    <property type="evidence" value="ECO:0007669"/>
    <property type="project" value="UniProtKB-KW"/>
</dbReference>
<dbReference type="GO" id="GO:0003700">
    <property type="term" value="F:DNA-binding transcription factor activity"/>
    <property type="evidence" value="ECO:0007669"/>
    <property type="project" value="InterPro"/>
</dbReference>
<dbReference type="CDD" id="cd00018">
    <property type="entry name" value="AP2"/>
    <property type="match status" value="1"/>
</dbReference>
<dbReference type="CDD" id="cd10017">
    <property type="entry name" value="B3_DNA"/>
    <property type="match status" value="1"/>
</dbReference>
<dbReference type="FunFam" id="3.30.730.10:FF:000008">
    <property type="entry name" value="AP2 domain-containing protein RAP2.8"/>
    <property type="match status" value="1"/>
</dbReference>
<dbReference type="Gene3D" id="3.30.730.10">
    <property type="entry name" value="AP2/ERF domain"/>
    <property type="match status" value="1"/>
</dbReference>
<dbReference type="Gene3D" id="2.40.330.10">
    <property type="entry name" value="DNA-binding pseudobarrel domain"/>
    <property type="match status" value="1"/>
</dbReference>
<dbReference type="InterPro" id="IPR001471">
    <property type="entry name" value="AP2/ERF_dom"/>
</dbReference>
<dbReference type="InterPro" id="IPR036955">
    <property type="entry name" value="AP2/ERF_dom_sf"/>
</dbReference>
<dbReference type="InterPro" id="IPR003340">
    <property type="entry name" value="B3_DNA-bd"/>
</dbReference>
<dbReference type="InterPro" id="IPR016177">
    <property type="entry name" value="DNA-bd_dom_sf"/>
</dbReference>
<dbReference type="InterPro" id="IPR015300">
    <property type="entry name" value="DNA-bd_pseudobarrel_sf"/>
</dbReference>
<dbReference type="InterPro" id="IPR044800">
    <property type="entry name" value="LEC2-like"/>
</dbReference>
<dbReference type="PANTHER" id="PTHR31140:SF56">
    <property type="entry name" value="AP2_ERF AND B3 DOMAIN-CONTAINING PROTEIN OS01G0141000"/>
    <property type="match status" value="1"/>
</dbReference>
<dbReference type="PANTHER" id="PTHR31140">
    <property type="entry name" value="B3 DOMAIN-CONTAINING TRANSCRIPTION FACTOR ABI3"/>
    <property type="match status" value="1"/>
</dbReference>
<dbReference type="Pfam" id="PF00847">
    <property type="entry name" value="AP2"/>
    <property type="match status" value="1"/>
</dbReference>
<dbReference type="Pfam" id="PF02362">
    <property type="entry name" value="B3"/>
    <property type="match status" value="1"/>
</dbReference>
<dbReference type="SMART" id="SM00380">
    <property type="entry name" value="AP2"/>
    <property type="match status" value="1"/>
</dbReference>
<dbReference type="SMART" id="SM01019">
    <property type="entry name" value="B3"/>
    <property type="match status" value="1"/>
</dbReference>
<dbReference type="SUPFAM" id="SSF54171">
    <property type="entry name" value="DNA-binding domain"/>
    <property type="match status" value="1"/>
</dbReference>
<dbReference type="SUPFAM" id="SSF101936">
    <property type="entry name" value="DNA-binding pseudobarrel domain"/>
    <property type="match status" value="1"/>
</dbReference>
<dbReference type="PROSITE" id="PS51032">
    <property type="entry name" value="AP2_ERF"/>
    <property type="match status" value="1"/>
</dbReference>
<dbReference type="PROSITE" id="PS50863">
    <property type="entry name" value="B3"/>
    <property type="match status" value="1"/>
</dbReference>
<comment type="subcellular location">
    <subcellularLocation>
        <location evidence="1 2">Nucleus</location>
    </subcellularLocation>
</comment>
<reference key="1">
    <citation type="journal article" date="2002" name="Nature">
        <title>The genome sequence and structure of rice chromosome 1.</title>
        <authorList>
            <person name="Sasaki T."/>
            <person name="Matsumoto T."/>
            <person name="Yamamoto K."/>
            <person name="Sakata K."/>
            <person name="Baba T."/>
            <person name="Katayose Y."/>
            <person name="Wu J."/>
            <person name="Niimura Y."/>
            <person name="Cheng Z."/>
            <person name="Nagamura Y."/>
            <person name="Antonio B.A."/>
            <person name="Kanamori H."/>
            <person name="Hosokawa S."/>
            <person name="Masukawa M."/>
            <person name="Arikawa K."/>
            <person name="Chiden Y."/>
            <person name="Hayashi M."/>
            <person name="Okamoto M."/>
            <person name="Ando T."/>
            <person name="Aoki H."/>
            <person name="Arita K."/>
            <person name="Hamada M."/>
            <person name="Harada C."/>
            <person name="Hijishita S."/>
            <person name="Honda M."/>
            <person name="Ichikawa Y."/>
            <person name="Idonuma A."/>
            <person name="Iijima M."/>
            <person name="Ikeda M."/>
            <person name="Ikeno M."/>
            <person name="Ito S."/>
            <person name="Ito T."/>
            <person name="Ito Y."/>
            <person name="Ito Y."/>
            <person name="Iwabuchi A."/>
            <person name="Kamiya K."/>
            <person name="Karasawa W."/>
            <person name="Katagiri S."/>
            <person name="Kikuta A."/>
            <person name="Kobayashi N."/>
            <person name="Kono I."/>
            <person name="Machita K."/>
            <person name="Maehara T."/>
            <person name="Mizuno H."/>
            <person name="Mizubayashi T."/>
            <person name="Mukai Y."/>
            <person name="Nagasaki H."/>
            <person name="Nakashima M."/>
            <person name="Nakama Y."/>
            <person name="Nakamichi Y."/>
            <person name="Nakamura M."/>
            <person name="Namiki N."/>
            <person name="Negishi M."/>
            <person name="Ohta I."/>
            <person name="Ono N."/>
            <person name="Saji S."/>
            <person name="Sakai K."/>
            <person name="Shibata M."/>
            <person name="Shimokawa T."/>
            <person name="Shomura A."/>
            <person name="Song J."/>
            <person name="Takazaki Y."/>
            <person name="Terasawa K."/>
            <person name="Tsuji K."/>
            <person name="Waki K."/>
            <person name="Yamagata H."/>
            <person name="Yamane H."/>
            <person name="Yoshiki S."/>
            <person name="Yoshihara R."/>
            <person name="Yukawa K."/>
            <person name="Zhong H."/>
            <person name="Iwama H."/>
            <person name="Endo T."/>
            <person name="Ito H."/>
            <person name="Hahn J.H."/>
            <person name="Kim H.-I."/>
            <person name="Eun M.-Y."/>
            <person name="Yano M."/>
            <person name="Jiang J."/>
            <person name="Gojobori T."/>
        </authorList>
    </citation>
    <scope>NUCLEOTIDE SEQUENCE [LARGE SCALE GENOMIC DNA]</scope>
    <source>
        <strain>cv. Nipponbare</strain>
    </source>
</reference>
<reference key="2">
    <citation type="journal article" date="2005" name="Nature">
        <title>The map-based sequence of the rice genome.</title>
        <authorList>
            <consortium name="International rice genome sequencing project (IRGSP)"/>
        </authorList>
    </citation>
    <scope>NUCLEOTIDE SEQUENCE [LARGE SCALE GENOMIC DNA]</scope>
    <source>
        <strain>cv. Nipponbare</strain>
    </source>
</reference>
<reference key="3">
    <citation type="journal article" date="2008" name="Nucleic Acids Res.">
        <title>The rice annotation project database (RAP-DB): 2008 update.</title>
        <authorList>
            <consortium name="The rice annotation project (RAP)"/>
        </authorList>
    </citation>
    <scope>GENOME REANNOTATION</scope>
    <source>
        <strain>cv. Nipponbare</strain>
    </source>
</reference>
<reference key="4">
    <citation type="journal article" date="2013" name="Rice">
        <title>Improvement of the Oryza sativa Nipponbare reference genome using next generation sequence and optical map data.</title>
        <authorList>
            <person name="Kawahara Y."/>
            <person name="de la Bastide M."/>
            <person name="Hamilton J.P."/>
            <person name="Kanamori H."/>
            <person name="McCombie W.R."/>
            <person name="Ouyang S."/>
            <person name="Schwartz D.C."/>
            <person name="Tanaka T."/>
            <person name="Wu J."/>
            <person name="Zhou S."/>
            <person name="Childs K.L."/>
            <person name="Davidson R.M."/>
            <person name="Lin H."/>
            <person name="Quesada-Ocampo L."/>
            <person name="Vaillancourt B."/>
            <person name="Sakai H."/>
            <person name="Lee S.S."/>
            <person name="Kim J."/>
            <person name="Numa H."/>
            <person name="Itoh T."/>
            <person name="Buell C.R."/>
            <person name="Matsumoto T."/>
        </authorList>
    </citation>
    <scope>GENOME REANNOTATION</scope>
    <source>
        <strain>cv. Nipponbare</strain>
    </source>
</reference>
<reference key="5">
    <citation type="journal article" date="2003" name="Science">
        <title>Collection, mapping, and annotation of over 28,000 cDNA clones from japonica rice.</title>
        <authorList>
            <consortium name="The rice full-length cDNA consortium"/>
        </authorList>
    </citation>
    <scope>NUCLEOTIDE SEQUENCE [LARGE SCALE MRNA]</scope>
    <source>
        <strain>cv. Nipponbare</strain>
    </source>
</reference>
<sequence>MGVVSFSSTSSGASTATTESGGAVRMSPEPVVAVAAAAQQLPVVKGVDSADEVVTSRPAAAAAQQSSRYKGVVPQPNGRWGAQIYERHARVWLGTFPDEEAAARAYDVAALRYRGRDAATNFPGAAASAAELAFLAAHSKAEIVDMLRKHTYADELRQGLRRGRGMGARAQPTPSWAREPLFEKAVTPSDVGKLNRLVVPKQHAEKHFPLRRAASSDSASAAATGKGVLLNFEDGEGKVWRFRYSYWNSSQSYVLTKGWSRFVREKGLRAGDTIVFSRSAYGPDKLLFIDCKKNNAAAATTTCAGDERPTTSGAEPRVVRLFGVDIAGGDCRKRERAVEMGQEVFLLKRQCVVHQRTPALGALLL</sequence>
<protein>
    <recommendedName>
        <fullName>AP2/ERF and B3 domain-containing protein Os01g0141000</fullName>
    </recommendedName>
</protein>
<name>Y1410_ORYSJ</name>
<keyword id="KW-0238">DNA-binding</keyword>
<keyword id="KW-0539">Nucleus</keyword>
<keyword id="KW-1185">Reference proteome</keyword>
<keyword id="KW-0804">Transcription</keyword>
<keyword id="KW-0805">Transcription regulation</keyword>
<evidence type="ECO:0000255" key="1">
    <source>
        <dbReference type="PROSITE-ProRule" id="PRU00326"/>
    </source>
</evidence>
<evidence type="ECO:0000255" key="2">
    <source>
        <dbReference type="PROSITE-ProRule" id="PRU00366"/>
    </source>
</evidence>
<evidence type="ECO:0000256" key="3">
    <source>
        <dbReference type="SAM" id="MobiDB-lite"/>
    </source>
</evidence>
<gene>
    <name type="ordered locus">Os01g0141000</name>
    <name type="ordered locus">LOC_Os01g04800</name>
    <name type="ORF">P0480E02.32</name>
</gene>